<keyword id="KW-0997">Cell inner membrane</keyword>
<keyword id="KW-1003">Cell membrane</keyword>
<keyword id="KW-0963">Cytoplasm</keyword>
<keyword id="KW-0342">GTP-binding</keyword>
<keyword id="KW-0472">Membrane</keyword>
<keyword id="KW-0547">Nucleotide-binding</keyword>
<keyword id="KW-1185">Reference proteome</keyword>
<keyword id="KW-0690">Ribosome biogenesis</keyword>
<keyword id="KW-0694">RNA-binding</keyword>
<keyword id="KW-0699">rRNA-binding</keyword>
<comment type="function">
    <text evidence="1">An essential GTPase that binds both GDP and GTP, with rapid nucleotide exchange. Plays a role in 16S rRNA processing and 30S ribosomal subunit biogenesis and possibly also in cell cycle regulation and energy metabolism.</text>
</comment>
<comment type="subunit">
    <text evidence="1">Monomer.</text>
</comment>
<comment type="subcellular location">
    <subcellularLocation>
        <location>Cytoplasm</location>
    </subcellularLocation>
    <subcellularLocation>
        <location evidence="1">Cell inner membrane</location>
        <topology evidence="1">Peripheral membrane protein</topology>
    </subcellularLocation>
</comment>
<comment type="similarity">
    <text evidence="1 2">Belongs to the TRAFAC class TrmE-Era-EngA-EngB-Septin-like GTPase superfamily. Era GTPase family.</text>
</comment>
<dbReference type="EMBL" id="AF123492">
    <property type="protein sequence ID" value="AAD40230.1"/>
    <property type="molecule type" value="Genomic_DNA"/>
</dbReference>
<dbReference type="EMBL" id="AE004091">
    <property type="protein sequence ID" value="AAG04160.1"/>
    <property type="molecule type" value="Genomic_DNA"/>
</dbReference>
<dbReference type="PIR" id="F83548">
    <property type="entry name" value="F83548"/>
</dbReference>
<dbReference type="RefSeq" id="NP_249462.1">
    <property type="nucleotide sequence ID" value="NC_002516.2"/>
</dbReference>
<dbReference type="RefSeq" id="WP_003085566.1">
    <property type="nucleotide sequence ID" value="NZ_QZGE01000007.1"/>
</dbReference>
<dbReference type="SMR" id="Q9XCX8"/>
<dbReference type="FunCoup" id="Q9XCX8">
    <property type="interactions" value="648"/>
</dbReference>
<dbReference type="STRING" id="208964.PA0771"/>
<dbReference type="PaxDb" id="208964-PA0771"/>
<dbReference type="GeneID" id="879487"/>
<dbReference type="KEGG" id="pae:PA0771"/>
<dbReference type="PATRIC" id="fig|208964.12.peg.801"/>
<dbReference type="PseudoCAP" id="PA0771"/>
<dbReference type="HOGENOM" id="CLU_038009_1_2_6"/>
<dbReference type="InParanoid" id="Q9XCX8"/>
<dbReference type="OrthoDB" id="9805918at2"/>
<dbReference type="PhylomeDB" id="Q9XCX8"/>
<dbReference type="BioCyc" id="PAER208964:G1FZ6-784-MONOMER"/>
<dbReference type="Proteomes" id="UP000002438">
    <property type="component" value="Chromosome"/>
</dbReference>
<dbReference type="GO" id="GO:0005829">
    <property type="term" value="C:cytosol"/>
    <property type="evidence" value="ECO:0000318"/>
    <property type="project" value="GO_Central"/>
</dbReference>
<dbReference type="GO" id="GO:0005886">
    <property type="term" value="C:plasma membrane"/>
    <property type="evidence" value="ECO:0007669"/>
    <property type="project" value="UniProtKB-SubCell"/>
</dbReference>
<dbReference type="GO" id="GO:0005525">
    <property type="term" value="F:GTP binding"/>
    <property type="evidence" value="ECO:0007669"/>
    <property type="project" value="UniProtKB-UniRule"/>
</dbReference>
<dbReference type="GO" id="GO:0003924">
    <property type="term" value="F:GTPase activity"/>
    <property type="evidence" value="ECO:0007669"/>
    <property type="project" value="UniProtKB-UniRule"/>
</dbReference>
<dbReference type="GO" id="GO:0043024">
    <property type="term" value="F:ribosomal small subunit binding"/>
    <property type="evidence" value="ECO:0000318"/>
    <property type="project" value="GO_Central"/>
</dbReference>
<dbReference type="GO" id="GO:0019843">
    <property type="term" value="F:rRNA binding"/>
    <property type="evidence" value="ECO:0000318"/>
    <property type="project" value="GO_Central"/>
</dbReference>
<dbReference type="GO" id="GO:0070181">
    <property type="term" value="F:small ribosomal subunit rRNA binding"/>
    <property type="evidence" value="ECO:0007669"/>
    <property type="project" value="UniProtKB-UniRule"/>
</dbReference>
<dbReference type="GO" id="GO:0000028">
    <property type="term" value="P:ribosomal small subunit assembly"/>
    <property type="evidence" value="ECO:0000318"/>
    <property type="project" value="GO_Central"/>
</dbReference>
<dbReference type="CDD" id="cd04163">
    <property type="entry name" value="Era"/>
    <property type="match status" value="1"/>
</dbReference>
<dbReference type="CDD" id="cd22534">
    <property type="entry name" value="KH-II_Era"/>
    <property type="match status" value="1"/>
</dbReference>
<dbReference type="FunFam" id="3.30.300.20:FF:000003">
    <property type="entry name" value="GTPase Era"/>
    <property type="match status" value="1"/>
</dbReference>
<dbReference type="FunFam" id="3.40.50.300:FF:000094">
    <property type="entry name" value="GTPase Era"/>
    <property type="match status" value="1"/>
</dbReference>
<dbReference type="Gene3D" id="3.30.300.20">
    <property type="match status" value="1"/>
</dbReference>
<dbReference type="Gene3D" id="3.40.50.300">
    <property type="entry name" value="P-loop containing nucleotide triphosphate hydrolases"/>
    <property type="match status" value="1"/>
</dbReference>
<dbReference type="HAMAP" id="MF_00367">
    <property type="entry name" value="GTPase_Era"/>
    <property type="match status" value="1"/>
</dbReference>
<dbReference type="InterPro" id="IPR030388">
    <property type="entry name" value="G_ERA_dom"/>
</dbReference>
<dbReference type="InterPro" id="IPR006073">
    <property type="entry name" value="GTP-bd"/>
</dbReference>
<dbReference type="InterPro" id="IPR005662">
    <property type="entry name" value="GTPase_Era-like"/>
</dbReference>
<dbReference type="InterPro" id="IPR015946">
    <property type="entry name" value="KH_dom-like_a/b"/>
</dbReference>
<dbReference type="InterPro" id="IPR004044">
    <property type="entry name" value="KH_dom_type_2"/>
</dbReference>
<dbReference type="InterPro" id="IPR009019">
    <property type="entry name" value="KH_sf_prok-type"/>
</dbReference>
<dbReference type="InterPro" id="IPR027417">
    <property type="entry name" value="P-loop_NTPase"/>
</dbReference>
<dbReference type="InterPro" id="IPR005225">
    <property type="entry name" value="Small_GTP-bd"/>
</dbReference>
<dbReference type="NCBIfam" id="TIGR00436">
    <property type="entry name" value="era"/>
    <property type="match status" value="1"/>
</dbReference>
<dbReference type="NCBIfam" id="NF000908">
    <property type="entry name" value="PRK00089.1"/>
    <property type="match status" value="1"/>
</dbReference>
<dbReference type="NCBIfam" id="TIGR00231">
    <property type="entry name" value="small_GTP"/>
    <property type="match status" value="1"/>
</dbReference>
<dbReference type="PANTHER" id="PTHR42698">
    <property type="entry name" value="GTPASE ERA"/>
    <property type="match status" value="1"/>
</dbReference>
<dbReference type="PANTHER" id="PTHR42698:SF1">
    <property type="entry name" value="GTPASE ERA, MITOCHONDRIAL"/>
    <property type="match status" value="1"/>
</dbReference>
<dbReference type="Pfam" id="PF07650">
    <property type="entry name" value="KH_2"/>
    <property type="match status" value="1"/>
</dbReference>
<dbReference type="Pfam" id="PF01926">
    <property type="entry name" value="MMR_HSR1"/>
    <property type="match status" value="1"/>
</dbReference>
<dbReference type="PRINTS" id="PR00326">
    <property type="entry name" value="GTP1OBG"/>
</dbReference>
<dbReference type="SUPFAM" id="SSF52540">
    <property type="entry name" value="P-loop containing nucleoside triphosphate hydrolases"/>
    <property type="match status" value="1"/>
</dbReference>
<dbReference type="SUPFAM" id="SSF54814">
    <property type="entry name" value="Prokaryotic type KH domain (KH-domain type II)"/>
    <property type="match status" value="1"/>
</dbReference>
<dbReference type="PROSITE" id="PS51713">
    <property type="entry name" value="G_ERA"/>
    <property type="match status" value="1"/>
</dbReference>
<dbReference type="PROSITE" id="PS50823">
    <property type="entry name" value="KH_TYPE_2"/>
    <property type="match status" value="1"/>
</dbReference>
<reference key="1">
    <citation type="journal article" date="1999" name="J. Bacteriol.">
        <title>Cloning and analysis of the rnc-era-recO operon from Pseudomonas aeruginosa.</title>
        <authorList>
            <person name="Powell B.S."/>
            <person name="Peters H.K. III"/>
            <person name="Nakamura Y."/>
            <person name="Court D.L."/>
        </authorList>
    </citation>
    <scope>NUCLEOTIDE SEQUENCE [GENOMIC DNA]</scope>
    <source>
        <strain>PAK</strain>
    </source>
</reference>
<reference key="2">
    <citation type="journal article" date="2000" name="Nature">
        <title>Complete genome sequence of Pseudomonas aeruginosa PAO1, an opportunistic pathogen.</title>
        <authorList>
            <person name="Stover C.K."/>
            <person name="Pham X.-Q.T."/>
            <person name="Erwin A.L."/>
            <person name="Mizoguchi S.D."/>
            <person name="Warrener P."/>
            <person name="Hickey M.J."/>
            <person name="Brinkman F.S.L."/>
            <person name="Hufnagle W.O."/>
            <person name="Kowalik D.J."/>
            <person name="Lagrou M."/>
            <person name="Garber R.L."/>
            <person name="Goltry L."/>
            <person name="Tolentino E."/>
            <person name="Westbrock-Wadman S."/>
            <person name="Yuan Y."/>
            <person name="Brody L.L."/>
            <person name="Coulter S.N."/>
            <person name="Folger K.R."/>
            <person name="Kas A."/>
            <person name="Larbig K."/>
            <person name="Lim R.M."/>
            <person name="Smith K.A."/>
            <person name="Spencer D.H."/>
            <person name="Wong G.K.-S."/>
            <person name="Wu Z."/>
            <person name="Paulsen I.T."/>
            <person name="Reizer J."/>
            <person name="Saier M.H. Jr."/>
            <person name="Hancock R.E.W."/>
            <person name="Lory S."/>
            <person name="Olson M.V."/>
        </authorList>
    </citation>
    <scope>NUCLEOTIDE SEQUENCE [LARGE SCALE GENOMIC DNA]</scope>
    <source>
        <strain>ATCC 15692 / DSM 22644 / CIP 104116 / JCM 14847 / LMG 12228 / 1C / PRS 101 / PAO1</strain>
    </source>
</reference>
<evidence type="ECO:0000255" key="1">
    <source>
        <dbReference type="HAMAP-Rule" id="MF_00367"/>
    </source>
</evidence>
<evidence type="ECO:0000255" key="2">
    <source>
        <dbReference type="PROSITE-ProRule" id="PRU01050"/>
    </source>
</evidence>
<evidence type="ECO:0000305" key="3"/>
<protein>
    <recommendedName>
        <fullName evidence="1">GTPase Era</fullName>
    </recommendedName>
</protein>
<gene>
    <name evidence="1" type="primary">era</name>
    <name type="ordered locus">PA0771</name>
</gene>
<feature type="chain" id="PRO_0000180036" description="GTPase Era">
    <location>
        <begin position="1"/>
        <end position="305"/>
    </location>
</feature>
<feature type="domain" description="Era-type G" evidence="2">
    <location>
        <begin position="13"/>
        <end position="181"/>
    </location>
</feature>
<feature type="domain" description="KH type-2" evidence="1">
    <location>
        <begin position="204"/>
        <end position="288"/>
    </location>
</feature>
<feature type="region of interest" description="G1" evidence="2">
    <location>
        <begin position="21"/>
        <end position="28"/>
    </location>
</feature>
<feature type="region of interest" description="G2" evidence="2">
    <location>
        <begin position="47"/>
        <end position="51"/>
    </location>
</feature>
<feature type="region of interest" description="G3" evidence="2">
    <location>
        <begin position="68"/>
        <end position="71"/>
    </location>
</feature>
<feature type="region of interest" description="G4" evidence="2">
    <location>
        <begin position="130"/>
        <end position="133"/>
    </location>
</feature>
<feature type="region of interest" description="G5" evidence="2">
    <location>
        <begin position="160"/>
        <end position="162"/>
    </location>
</feature>
<feature type="binding site" evidence="1">
    <location>
        <begin position="21"/>
        <end position="28"/>
    </location>
    <ligand>
        <name>GTP</name>
        <dbReference type="ChEBI" id="CHEBI:37565"/>
    </ligand>
</feature>
<feature type="binding site" evidence="1">
    <location>
        <begin position="68"/>
        <end position="72"/>
    </location>
    <ligand>
        <name>GTP</name>
        <dbReference type="ChEBI" id="CHEBI:37565"/>
    </ligand>
</feature>
<feature type="binding site" evidence="1">
    <location>
        <begin position="130"/>
        <end position="133"/>
    </location>
    <ligand>
        <name>GTP</name>
        <dbReference type="ChEBI" id="CHEBI:37565"/>
    </ligand>
</feature>
<feature type="sequence conflict" description="In Ref. 1; AAD40230." evidence="3" ref="1">
    <original>AQH</original>
    <variation>GQD</variation>
    <location>
        <begin position="162"/>
        <end position="164"/>
    </location>
</feature>
<feature type="sequence conflict" description="In Ref. 1; AAD40230." evidence="3" ref="1">
    <original>R</original>
    <variation>C</variation>
    <location>
        <position position="178"/>
    </location>
</feature>
<feature type="sequence conflict" description="In Ref. 1; AAD40230." evidence="3" ref="1">
    <original>H</original>
    <variation>Y</variation>
    <location>
        <position position="184"/>
    </location>
</feature>
<feature type="sequence conflict" description="In Ref. 1; AAD40230." evidence="3" ref="1">
    <original>D</original>
    <variation>E</variation>
    <location>
        <position position="193"/>
    </location>
</feature>
<organism>
    <name type="scientific">Pseudomonas aeruginosa (strain ATCC 15692 / DSM 22644 / CIP 104116 / JCM 14847 / LMG 12228 / 1C / PRS 101 / PAO1)</name>
    <dbReference type="NCBI Taxonomy" id="208964"/>
    <lineage>
        <taxon>Bacteria</taxon>
        <taxon>Pseudomonadati</taxon>
        <taxon>Pseudomonadota</taxon>
        <taxon>Gammaproteobacteria</taxon>
        <taxon>Pseudomonadales</taxon>
        <taxon>Pseudomonadaceae</taxon>
        <taxon>Pseudomonas</taxon>
    </lineage>
</organism>
<proteinExistence type="inferred from homology"/>
<sequence length="305" mass="34550">MTDMHDDIPAGSRCGYVAIVGRPNVGKSTLLNHILGQKLAITSRKPQTTRHNMLGIKTEGEVQAVYVDTPGLHKSGEKALNRYMNRTASAALKDVDVVIFVVDRTRWTEEDQMVLERVQYVSCPVLIAVNKTDRIEEKADLLPHLEWLTQQLPKAEVVPISAQHGTNLDVLEKLVAERLPESEHFFPEDQITDRSSRFLAAELVREKIMRQLGAELPYQITVEIEEFKQEGRILHIHALILVEREGQKKIIIGDKGERIKSIGQNARKDMEVLFDSKVMLNLWVKVKGGWSDDERALRSLGYGDL</sequence>
<name>ERA_PSEAE</name>
<accession>Q9XCX8</accession>